<dbReference type="EMBL" id="BC146261">
    <property type="protein sequence ID" value="AAI46262.1"/>
    <property type="molecule type" value="mRNA"/>
</dbReference>
<dbReference type="RefSeq" id="NP_001092673.2">
    <property type="nucleotide sequence ID" value="NM_001099203.2"/>
</dbReference>
<dbReference type="FunCoup" id="A6H7I7">
    <property type="interactions" value="43"/>
</dbReference>
<dbReference type="STRING" id="9913.ENSBTAP00000017456"/>
<dbReference type="PaxDb" id="9913-ENSBTAP00000017456"/>
<dbReference type="Ensembl" id="ENSBTAT00000095511.1">
    <property type="protein sequence ID" value="ENSBTAP00000076641.1"/>
    <property type="gene ID" value="ENSBTAG00000013131.7"/>
</dbReference>
<dbReference type="Ensembl" id="ENSBTAT00000129758.1">
    <property type="protein sequence ID" value="ENSBTAP00000096535.1"/>
    <property type="gene ID" value="ENSBTAG00000013131.7"/>
</dbReference>
<dbReference type="GeneID" id="787384"/>
<dbReference type="KEGG" id="bta:787384"/>
<dbReference type="CTD" id="79927"/>
<dbReference type="VGNC" id="VGNC:54426">
    <property type="gene designation" value="FAM110D"/>
</dbReference>
<dbReference type="eggNOG" id="ENOG502S0DB">
    <property type="taxonomic scope" value="Eukaryota"/>
</dbReference>
<dbReference type="GeneTree" id="ENSGT00950000183056"/>
<dbReference type="HOGENOM" id="CLU_050540_1_0_1"/>
<dbReference type="InParanoid" id="A6H7I7"/>
<dbReference type="OrthoDB" id="10028183at2759"/>
<dbReference type="TreeFam" id="TF330964"/>
<dbReference type="Proteomes" id="UP000009136">
    <property type="component" value="Chromosome 2"/>
</dbReference>
<dbReference type="InterPro" id="IPR025740">
    <property type="entry name" value="FAM110"/>
</dbReference>
<dbReference type="InterPro" id="IPR025741">
    <property type="entry name" value="FAM110_C"/>
</dbReference>
<dbReference type="InterPro" id="IPR025739">
    <property type="entry name" value="FAM110_N"/>
</dbReference>
<dbReference type="PANTHER" id="PTHR14758">
    <property type="entry name" value="AGAP005440-PA"/>
    <property type="match status" value="1"/>
</dbReference>
<dbReference type="PANTHER" id="PTHR14758:SF3">
    <property type="entry name" value="PROTEIN FAM110D"/>
    <property type="match status" value="1"/>
</dbReference>
<dbReference type="Pfam" id="PF14160">
    <property type="entry name" value="FAM110_C"/>
    <property type="match status" value="1"/>
</dbReference>
<dbReference type="Pfam" id="PF14161">
    <property type="entry name" value="FAM110_N"/>
    <property type="match status" value="1"/>
</dbReference>
<sequence length="270" mass="28738">MLLASPSTPSRGRTPSAVERLEADKAKYVKTHQVIARRQEPALRGGPGPLTPHTCNELGPPPSPRTPRPARRGSGRRLPRPDSLIFYRQKRDCKASVNKENAKGQGLVRRLFLGSPRDVASSSAGSSERPAAPGGWTAPQDAPEAAGKRALCPTCSLPLSEKERFFNYCGLERALVEVLGAERFSPQSWGADASPQPGTSPPPGSGDASDWTSSEGGADRRDGAEGGGSAAAGSERDGRPQVSVVERNARVIQWLYGCQRARGPPRESEV</sequence>
<accession>A6H7I7</accession>
<reference key="1">
    <citation type="submission" date="2007-06" db="EMBL/GenBank/DDBJ databases">
        <authorList>
            <consortium name="NIH - Mammalian Gene Collection (MGC) project"/>
        </authorList>
    </citation>
    <scope>NUCLEOTIDE SEQUENCE [LARGE SCALE MRNA]</scope>
    <source>
        <strain>Hereford</strain>
        <tissue>Fetal skin</tissue>
    </source>
</reference>
<comment type="similarity">
    <text evidence="2">Belongs to the FAM110 family.</text>
</comment>
<feature type="chain" id="PRO_0000318715" description="Protein FAM110D">
    <location>
        <begin position="1"/>
        <end position="270"/>
    </location>
</feature>
<feature type="region of interest" description="Disordered" evidence="1">
    <location>
        <begin position="1"/>
        <end position="83"/>
    </location>
</feature>
<feature type="region of interest" description="Disordered" evidence="1">
    <location>
        <begin position="117"/>
        <end position="142"/>
    </location>
</feature>
<feature type="region of interest" description="Disordered" evidence="1">
    <location>
        <begin position="186"/>
        <end position="244"/>
    </location>
</feature>
<feature type="compositionally biased region" description="Low complexity" evidence="1">
    <location>
        <begin position="1"/>
        <end position="16"/>
    </location>
</feature>
<feature type="compositionally biased region" description="Basic residues" evidence="1">
    <location>
        <begin position="68"/>
        <end position="78"/>
    </location>
</feature>
<proteinExistence type="evidence at transcript level"/>
<evidence type="ECO:0000256" key="1">
    <source>
        <dbReference type="SAM" id="MobiDB-lite"/>
    </source>
</evidence>
<evidence type="ECO:0000305" key="2"/>
<name>F110D_BOVIN</name>
<protein>
    <recommendedName>
        <fullName>Protein FAM110D</fullName>
    </recommendedName>
</protein>
<keyword id="KW-1185">Reference proteome</keyword>
<gene>
    <name type="primary">FAM110D</name>
    <name type="synonym">GRRP1</name>
</gene>
<organism>
    <name type="scientific">Bos taurus</name>
    <name type="common">Bovine</name>
    <dbReference type="NCBI Taxonomy" id="9913"/>
    <lineage>
        <taxon>Eukaryota</taxon>
        <taxon>Metazoa</taxon>
        <taxon>Chordata</taxon>
        <taxon>Craniata</taxon>
        <taxon>Vertebrata</taxon>
        <taxon>Euteleostomi</taxon>
        <taxon>Mammalia</taxon>
        <taxon>Eutheria</taxon>
        <taxon>Laurasiatheria</taxon>
        <taxon>Artiodactyla</taxon>
        <taxon>Ruminantia</taxon>
        <taxon>Pecora</taxon>
        <taxon>Bovidae</taxon>
        <taxon>Bovinae</taxon>
        <taxon>Bos</taxon>
    </lineage>
</organism>